<accession>Q2G491</accession>
<gene>
    <name evidence="1" type="primary">def</name>
    <name type="ordered locus">Saro_2896</name>
</gene>
<organism>
    <name type="scientific">Novosphingobium aromaticivorans (strain ATCC 700278 / DSM 12444 / CCUG 56034 / CIP 105152 / NBRC 16084 / F199)</name>
    <dbReference type="NCBI Taxonomy" id="279238"/>
    <lineage>
        <taxon>Bacteria</taxon>
        <taxon>Pseudomonadati</taxon>
        <taxon>Pseudomonadota</taxon>
        <taxon>Alphaproteobacteria</taxon>
        <taxon>Sphingomonadales</taxon>
        <taxon>Sphingomonadaceae</taxon>
        <taxon>Novosphingobium</taxon>
    </lineage>
</organism>
<name>DEF_NOVAD</name>
<reference key="1">
    <citation type="submission" date="2006-01" db="EMBL/GenBank/DDBJ databases">
        <title>Complete sequence of Novosphingobium aromaticivorans DSM 12444.</title>
        <authorList>
            <consortium name="US DOE Joint Genome Institute"/>
            <person name="Copeland A."/>
            <person name="Lucas S."/>
            <person name="Lapidus A."/>
            <person name="Barry K."/>
            <person name="Detter J.C."/>
            <person name="Glavina T."/>
            <person name="Hammon N."/>
            <person name="Israni S."/>
            <person name="Pitluck S."/>
            <person name="Chain P."/>
            <person name="Malfatti S."/>
            <person name="Shin M."/>
            <person name="Vergez L."/>
            <person name="Schmutz J."/>
            <person name="Larimer F."/>
            <person name="Land M."/>
            <person name="Kyrpides N."/>
            <person name="Ivanova N."/>
            <person name="Fredrickson J."/>
            <person name="Balkwill D."/>
            <person name="Romine M.F."/>
            <person name="Richardson P."/>
        </authorList>
    </citation>
    <scope>NUCLEOTIDE SEQUENCE [LARGE SCALE GENOMIC DNA]</scope>
    <source>
        <strain>ATCC 700278 / DSM 12444 / CCUG 56034 / CIP 105152 / NBRC 16084 / F199</strain>
    </source>
</reference>
<sequence length="188" mass="21485">MAIREIIEVPDPRLKQVSVPVEKFDDELKTLVEDMFETMYDAPGIGLAAIQVGVPLRVLVIDLQPDDPDAEPVACDHDGHHHHHQPTKKEPRVFINPEILDPSEEYSVYQEGCLSVPEIYAEVERPATIRARWQDLDGKVHEEQMEGLMATCLQHEMDHLEGVLFIDHLSRLKRNMALKKLEKLRKAA</sequence>
<protein>
    <recommendedName>
        <fullName evidence="1">Peptide deformylase</fullName>
        <shortName evidence="1">PDF</shortName>
        <ecNumber evidence="1">3.5.1.88</ecNumber>
    </recommendedName>
    <alternativeName>
        <fullName evidence="1">Polypeptide deformylase</fullName>
    </alternativeName>
</protein>
<evidence type="ECO:0000255" key="1">
    <source>
        <dbReference type="HAMAP-Rule" id="MF_00163"/>
    </source>
</evidence>
<evidence type="ECO:0000256" key="2">
    <source>
        <dbReference type="SAM" id="MobiDB-lite"/>
    </source>
</evidence>
<comment type="function">
    <text evidence="1">Removes the formyl group from the N-terminal Met of newly synthesized proteins. Requires at least a dipeptide for an efficient rate of reaction. N-terminal L-methionine is a prerequisite for activity but the enzyme has broad specificity at other positions.</text>
</comment>
<comment type="catalytic activity">
    <reaction evidence="1">
        <text>N-terminal N-formyl-L-methionyl-[peptide] + H2O = N-terminal L-methionyl-[peptide] + formate</text>
        <dbReference type="Rhea" id="RHEA:24420"/>
        <dbReference type="Rhea" id="RHEA-COMP:10639"/>
        <dbReference type="Rhea" id="RHEA-COMP:10640"/>
        <dbReference type="ChEBI" id="CHEBI:15377"/>
        <dbReference type="ChEBI" id="CHEBI:15740"/>
        <dbReference type="ChEBI" id="CHEBI:49298"/>
        <dbReference type="ChEBI" id="CHEBI:64731"/>
        <dbReference type="EC" id="3.5.1.88"/>
    </reaction>
</comment>
<comment type="cofactor">
    <cofactor evidence="1">
        <name>Fe(2+)</name>
        <dbReference type="ChEBI" id="CHEBI:29033"/>
    </cofactor>
    <text evidence="1">Binds 1 Fe(2+) ion.</text>
</comment>
<comment type="similarity">
    <text evidence="1">Belongs to the polypeptide deformylase family.</text>
</comment>
<dbReference type="EC" id="3.5.1.88" evidence="1"/>
<dbReference type="EMBL" id="CP000248">
    <property type="protein sequence ID" value="ABD27332.1"/>
    <property type="molecule type" value="Genomic_DNA"/>
</dbReference>
<dbReference type="RefSeq" id="WP_011446536.1">
    <property type="nucleotide sequence ID" value="NC_007794.1"/>
</dbReference>
<dbReference type="SMR" id="Q2G491"/>
<dbReference type="STRING" id="279238.Saro_2896"/>
<dbReference type="KEGG" id="nar:Saro_2896"/>
<dbReference type="eggNOG" id="COG0242">
    <property type="taxonomic scope" value="Bacteria"/>
</dbReference>
<dbReference type="HOGENOM" id="CLU_061901_2_0_5"/>
<dbReference type="Proteomes" id="UP000009134">
    <property type="component" value="Chromosome"/>
</dbReference>
<dbReference type="GO" id="GO:0046872">
    <property type="term" value="F:metal ion binding"/>
    <property type="evidence" value="ECO:0007669"/>
    <property type="project" value="UniProtKB-KW"/>
</dbReference>
<dbReference type="GO" id="GO:0042586">
    <property type="term" value="F:peptide deformylase activity"/>
    <property type="evidence" value="ECO:0007669"/>
    <property type="project" value="UniProtKB-UniRule"/>
</dbReference>
<dbReference type="GO" id="GO:0043686">
    <property type="term" value="P:co-translational protein modification"/>
    <property type="evidence" value="ECO:0007669"/>
    <property type="project" value="TreeGrafter"/>
</dbReference>
<dbReference type="GO" id="GO:0006412">
    <property type="term" value="P:translation"/>
    <property type="evidence" value="ECO:0007669"/>
    <property type="project" value="UniProtKB-UniRule"/>
</dbReference>
<dbReference type="CDD" id="cd00487">
    <property type="entry name" value="Pep_deformylase"/>
    <property type="match status" value="1"/>
</dbReference>
<dbReference type="Gene3D" id="3.90.45.10">
    <property type="entry name" value="Peptide deformylase"/>
    <property type="match status" value="1"/>
</dbReference>
<dbReference type="HAMAP" id="MF_00163">
    <property type="entry name" value="Pep_deformylase"/>
    <property type="match status" value="1"/>
</dbReference>
<dbReference type="InterPro" id="IPR023635">
    <property type="entry name" value="Peptide_deformylase"/>
</dbReference>
<dbReference type="InterPro" id="IPR036821">
    <property type="entry name" value="Peptide_deformylase_sf"/>
</dbReference>
<dbReference type="NCBIfam" id="TIGR00079">
    <property type="entry name" value="pept_deformyl"/>
    <property type="match status" value="1"/>
</dbReference>
<dbReference type="NCBIfam" id="NF001159">
    <property type="entry name" value="PRK00150.1-3"/>
    <property type="match status" value="1"/>
</dbReference>
<dbReference type="PANTHER" id="PTHR10458">
    <property type="entry name" value="PEPTIDE DEFORMYLASE"/>
    <property type="match status" value="1"/>
</dbReference>
<dbReference type="PANTHER" id="PTHR10458:SF22">
    <property type="entry name" value="PEPTIDE DEFORMYLASE"/>
    <property type="match status" value="1"/>
</dbReference>
<dbReference type="Pfam" id="PF01327">
    <property type="entry name" value="Pep_deformylase"/>
    <property type="match status" value="1"/>
</dbReference>
<dbReference type="PIRSF" id="PIRSF004749">
    <property type="entry name" value="Pep_def"/>
    <property type="match status" value="1"/>
</dbReference>
<dbReference type="PRINTS" id="PR01576">
    <property type="entry name" value="PDEFORMYLASE"/>
</dbReference>
<dbReference type="SUPFAM" id="SSF56420">
    <property type="entry name" value="Peptide deformylase"/>
    <property type="match status" value="1"/>
</dbReference>
<proteinExistence type="inferred from homology"/>
<keyword id="KW-0378">Hydrolase</keyword>
<keyword id="KW-0408">Iron</keyword>
<keyword id="KW-0479">Metal-binding</keyword>
<keyword id="KW-0648">Protein biosynthesis</keyword>
<keyword id="KW-1185">Reference proteome</keyword>
<feature type="chain" id="PRO_0000301071" description="Peptide deformylase">
    <location>
        <begin position="1"/>
        <end position="188"/>
    </location>
</feature>
<feature type="region of interest" description="Disordered" evidence="2">
    <location>
        <begin position="70"/>
        <end position="90"/>
    </location>
</feature>
<feature type="active site" evidence="1">
    <location>
        <position position="156"/>
    </location>
</feature>
<feature type="binding site" evidence="1">
    <location>
        <position position="113"/>
    </location>
    <ligand>
        <name>Fe cation</name>
        <dbReference type="ChEBI" id="CHEBI:24875"/>
    </ligand>
</feature>
<feature type="binding site" evidence="1">
    <location>
        <position position="155"/>
    </location>
    <ligand>
        <name>Fe cation</name>
        <dbReference type="ChEBI" id="CHEBI:24875"/>
    </ligand>
</feature>
<feature type="binding site" evidence="1">
    <location>
        <position position="159"/>
    </location>
    <ligand>
        <name>Fe cation</name>
        <dbReference type="ChEBI" id="CHEBI:24875"/>
    </ligand>
</feature>